<gene>
    <name evidence="1" type="primary">nuoB</name>
    <name type="ordered locus">BUAP5A_153</name>
</gene>
<accession>B8D8V6</accession>
<protein>
    <recommendedName>
        <fullName evidence="1">NADH-quinone oxidoreductase subunit B</fullName>
        <ecNumber evidence="1">7.1.1.-</ecNumber>
    </recommendedName>
    <alternativeName>
        <fullName evidence="1">NADH dehydrogenase I subunit B</fullName>
    </alternativeName>
    <alternativeName>
        <fullName evidence="1">NDH-1 subunit B</fullName>
    </alternativeName>
</protein>
<feature type="chain" id="PRO_0000376156" description="NADH-quinone oxidoreductase subunit B">
    <location>
        <begin position="1"/>
        <end position="224"/>
    </location>
</feature>
<feature type="binding site" evidence="1">
    <location>
        <position position="67"/>
    </location>
    <ligand>
        <name>[4Fe-4S] cluster</name>
        <dbReference type="ChEBI" id="CHEBI:49883"/>
    </ligand>
</feature>
<feature type="binding site" evidence="1">
    <location>
        <position position="68"/>
    </location>
    <ligand>
        <name>[4Fe-4S] cluster</name>
        <dbReference type="ChEBI" id="CHEBI:49883"/>
    </ligand>
</feature>
<feature type="binding site" evidence="1">
    <location>
        <position position="133"/>
    </location>
    <ligand>
        <name>[4Fe-4S] cluster</name>
        <dbReference type="ChEBI" id="CHEBI:49883"/>
    </ligand>
</feature>
<feature type="binding site" evidence="1">
    <location>
        <position position="162"/>
    </location>
    <ligand>
        <name>[4Fe-4S] cluster</name>
        <dbReference type="ChEBI" id="CHEBI:49883"/>
    </ligand>
</feature>
<proteinExistence type="inferred from homology"/>
<reference key="1">
    <citation type="journal article" date="2009" name="Science">
        <title>The dynamics and time scale of ongoing genomic erosion in symbiotic bacteria.</title>
        <authorList>
            <person name="Moran N.A."/>
            <person name="McLaughlin H.J."/>
            <person name="Sorek R."/>
        </authorList>
    </citation>
    <scope>NUCLEOTIDE SEQUENCE [LARGE SCALE GENOMIC DNA]</scope>
    <source>
        <strain>5A</strain>
    </source>
</reference>
<name>NUOB_BUCA5</name>
<comment type="function">
    <text evidence="1">NDH-1 shuttles electrons from NADH, via FMN and iron-sulfur (Fe-S) centers, to quinones in the respiratory chain. The immediate electron acceptor for the enzyme in this species is believed to be ubiquinone. Couples the redox reaction to proton translocation (for every two electrons transferred, four hydrogen ions are translocated across the cytoplasmic membrane), and thus conserves the redox energy in a proton gradient.</text>
</comment>
<comment type="catalytic activity">
    <reaction evidence="1">
        <text>a quinone + NADH + 5 H(+)(in) = a quinol + NAD(+) + 4 H(+)(out)</text>
        <dbReference type="Rhea" id="RHEA:57888"/>
        <dbReference type="ChEBI" id="CHEBI:15378"/>
        <dbReference type="ChEBI" id="CHEBI:24646"/>
        <dbReference type="ChEBI" id="CHEBI:57540"/>
        <dbReference type="ChEBI" id="CHEBI:57945"/>
        <dbReference type="ChEBI" id="CHEBI:132124"/>
    </reaction>
</comment>
<comment type="cofactor">
    <cofactor evidence="1">
        <name>[4Fe-4S] cluster</name>
        <dbReference type="ChEBI" id="CHEBI:49883"/>
    </cofactor>
    <text evidence="1">Binds 1 [4Fe-4S] cluster.</text>
</comment>
<comment type="subunit">
    <text evidence="1">NDH-1 is composed of 13 different subunits. Subunits NuoB, CD, E, F, and G constitute the peripheral sector of the complex.</text>
</comment>
<comment type="subcellular location">
    <subcellularLocation>
        <location evidence="1">Cell membrane</location>
        <topology evidence="1">Peripheral membrane protein</topology>
        <orientation evidence="1">Cytoplasmic side</orientation>
    </subcellularLocation>
</comment>
<comment type="similarity">
    <text evidence="1">Belongs to the complex I 20 kDa subunit family.</text>
</comment>
<keyword id="KW-0004">4Fe-4S</keyword>
<keyword id="KW-1003">Cell membrane</keyword>
<keyword id="KW-0408">Iron</keyword>
<keyword id="KW-0411">Iron-sulfur</keyword>
<keyword id="KW-0472">Membrane</keyword>
<keyword id="KW-0479">Metal-binding</keyword>
<keyword id="KW-0520">NAD</keyword>
<keyword id="KW-0874">Quinone</keyword>
<keyword id="KW-1278">Translocase</keyword>
<keyword id="KW-0813">Transport</keyword>
<keyword id="KW-0830">Ubiquinone</keyword>
<dbReference type="EC" id="7.1.1.-" evidence="1"/>
<dbReference type="EMBL" id="CP001161">
    <property type="protein sequence ID" value="ACL30528.1"/>
    <property type="molecule type" value="Genomic_DNA"/>
</dbReference>
<dbReference type="RefSeq" id="WP_009874111.1">
    <property type="nucleotide sequence ID" value="NC_011833.1"/>
</dbReference>
<dbReference type="SMR" id="B8D8V6"/>
<dbReference type="KEGG" id="bap:BUAP5A_153"/>
<dbReference type="HOGENOM" id="CLU_055737_7_3_6"/>
<dbReference type="OrthoDB" id="9786737at2"/>
<dbReference type="Proteomes" id="UP000006904">
    <property type="component" value="Chromosome"/>
</dbReference>
<dbReference type="GO" id="GO:0005886">
    <property type="term" value="C:plasma membrane"/>
    <property type="evidence" value="ECO:0007669"/>
    <property type="project" value="UniProtKB-SubCell"/>
</dbReference>
<dbReference type="GO" id="GO:0045271">
    <property type="term" value="C:respiratory chain complex I"/>
    <property type="evidence" value="ECO:0007669"/>
    <property type="project" value="TreeGrafter"/>
</dbReference>
<dbReference type="GO" id="GO:0051539">
    <property type="term" value="F:4 iron, 4 sulfur cluster binding"/>
    <property type="evidence" value="ECO:0007669"/>
    <property type="project" value="UniProtKB-KW"/>
</dbReference>
<dbReference type="GO" id="GO:0005506">
    <property type="term" value="F:iron ion binding"/>
    <property type="evidence" value="ECO:0007669"/>
    <property type="project" value="UniProtKB-UniRule"/>
</dbReference>
<dbReference type="GO" id="GO:0008137">
    <property type="term" value="F:NADH dehydrogenase (ubiquinone) activity"/>
    <property type="evidence" value="ECO:0007669"/>
    <property type="project" value="InterPro"/>
</dbReference>
<dbReference type="GO" id="GO:0050136">
    <property type="term" value="F:NADH:ubiquinone reductase (non-electrogenic) activity"/>
    <property type="evidence" value="ECO:0007669"/>
    <property type="project" value="UniProtKB-UniRule"/>
</dbReference>
<dbReference type="GO" id="GO:0048038">
    <property type="term" value="F:quinone binding"/>
    <property type="evidence" value="ECO:0007669"/>
    <property type="project" value="UniProtKB-KW"/>
</dbReference>
<dbReference type="GO" id="GO:0009060">
    <property type="term" value="P:aerobic respiration"/>
    <property type="evidence" value="ECO:0007669"/>
    <property type="project" value="TreeGrafter"/>
</dbReference>
<dbReference type="GO" id="GO:0015990">
    <property type="term" value="P:electron transport coupled proton transport"/>
    <property type="evidence" value="ECO:0007669"/>
    <property type="project" value="TreeGrafter"/>
</dbReference>
<dbReference type="FunFam" id="3.40.50.12280:FF:000002">
    <property type="entry name" value="NADH-quinone oxidoreductase subunit B"/>
    <property type="match status" value="1"/>
</dbReference>
<dbReference type="Gene3D" id="3.40.50.12280">
    <property type="match status" value="1"/>
</dbReference>
<dbReference type="HAMAP" id="MF_01356">
    <property type="entry name" value="NDH1_NuoB"/>
    <property type="match status" value="1"/>
</dbReference>
<dbReference type="InterPro" id="IPR006137">
    <property type="entry name" value="NADH_UbQ_OxRdtase-like_20kDa"/>
</dbReference>
<dbReference type="InterPro" id="IPR006138">
    <property type="entry name" value="NADH_UQ_OxRdtase_20Kd_su"/>
</dbReference>
<dbReference type="NCBIfam" id="TIGR01957">
    <property type="entry name" value="nuoB_fam"/>
    <property type="match status" value="1"/>
</dbReference>
<dbReference type="NCBIfam" id="NF005012">
    <property type="entry name" value="PRK06411.1"/>
    <property type="match status" value="1"/>
</dbReference>
<dbReference type="PANTHER" id="PTHR11995">
    <property type="entry name" value="NADH DEHYDROGENASE"/>
    <property type="match status" value="1"/>
</dbReference>
<dbReference type="PANTHER" id="PTHR11995:SF14">
    <property type="entry name" value="NADH DEHYDROGENASE [UBIQUINONE] IRON-SULFUR PROTEIN 7, MITOCHONDRIAL"/>
    <property type="match status" value="1"/>
</dbReference>
<dbReference type="Pfam" id="PF01058">
    <property type="entry name" value="Oxidored_q6"/>
    <property type="match status" value="1"/>
</dbReference>
<dbReference type="SUPFAM" id="SSF56770">
    <property type="entry name" value="HydA/Nqo6-like"/>
    <property type="match status" value="1"/>
</dbReference>
<dbReference type="PROSITE" id="PS01150">
    <property type="entry name" value="COMPLEX1_20K"/>
    <property type="match status" value="1"/>
</dbReference>
<evidence type="ECO:0000255" key="1">
    <source>
        <dbReference type="HAMAP-Rule" id="MF_01356"/>
    </source>
</evidence>
<sequence length="224" mass="25597">MNYTLTKADSDNNNKKYPKQTIESVSDPLEEYLKKNIFMGKITQLLHKLVNWGRKNSLWPYNFGLSCCYVEMVSAFTSVHDVARFGSEVLRASPRQADVMVIAGTPFIKMAPVIQRLYDQMLEPKWVISMGACANSGGMYDIYSVVQGVDKFLPVDIYIPGCPPRPEAYMQALILLQKLINEERRPLSWVIGEQGVYHKKMPSERVQKRSKRINIINLSTSEKI</sequence>
<organism>
    <name type="scientific">Buchnera aphidicola subsp. Acyrthosiphon pisum (strain 5A)</name>
    <dbReference type="NCBI Taxonomy" id="563178"/>
    <lineage>
        <taxon>Bacteria</taxon>
        <taxon>Pseudomonadati</taxon>
        <taxon>Pseudomonadota</taxon>
        <taxon>Gammaproteobacteria</taxon>
        <taxon>Enterobacterales</taxon>
        <taxon>Erwiniaceae</taxon>
        <taxon>Buchnera</taxon>
    </lineage>
</organism>